<dbReference type="EMBL" id="AB036344">
    <property type="protein sequence ID" value="BAB17307.1"/>
    <property type="molecule type" value="Genomic_DNA"/>
</dbReference>
<dbReference type="EMBL" id="AE004437">
    <property type="protein sequence ID" value="AAG19539.1"/>
    <property type="molecule type" value="Genomic_DNA"/>
</dbReference>
<dbReference type="PIR" id="G84271">
    <property type="entry name" value="G84271"/>
</dbReference>
<dbReference type="RefSeq" id="WP_010902834.1">
    <property type="nucleotide sequence ID" value="NC_002607.1"/>
</dbReference>
<dbReference type="SMR" id="P61120"/>
<dbReference type="FunCoup" id="P61120">
    <property type="interactions" value="53"/>
</dbReference>
<dbReference type="STRING" id="64091.VNG_1159G"/>
<dbReference type="PaxDb" id="64091-VNG_1159G"/>
<dbReference type="KEGG" id="hal:VNG_1159G"/>
<dbReference type="PATRIC" id="fig|64091.14.peg.886"/>
<dbReference type="HOGENOM" id="CLU_190191_0_0_2"/>
<dbReference type="InParanoid" id="P61120"/>
<dbReference type="OrthoDB" id="55506at2157"/>
<dbReference type="PhylomeDB" id="P61120"/>
<dbReference type="Proteomes" id="UP000000554">
    <property type="component" value="Chromosome"/>
</dbReference>
<dbReference type="GO" id="GO:1990904">
    <property type="term" value="C:ribonucleoprotein complex"/>
    <property type="evidence" value="ECO:0007669"/>
    <property type="project" value="UniProtKB-KW"/>
</dbReference>
<dbReference type="GO" id="GO:0005840">
    <property type="term" value="C:ribosome"/>
    <property type="evidence" value="ECO:0007669"/>
    <property type="project" value="UniProtKB-KW"/>
</dbReference>
<dbReference type="GO" id="GO:0019843">
    <property type="term" value="F:rRNA binding"/>
    <property type="evidence" value="ECO:0007669"/>
    <property type="project" value="UniProtKB-UniRule"/>
</dbReference>
<dbReference type="GO" id="GO:0003735">
    <property type="term" value="F:structural constituent of ribosome"/>
    <property type="evidence" value="ECO:0007669"/>
    <property type="project" value="InterPro"/>
</dbReference>
<dbReference type="GO" id="GO:0008270">
    <property type="term" value="F:zinc ion binding"/>
    <property type="evidence" value="ECO:0007669"/>
    <property type="project" value="UniProtKB-UniRule"/>
</dbReference>
<dbReference type="GO" id="GO:0006412">
    <property type="term" value="P:translation"/>
    <property type="evidence" value="ECO:0007669"/>
    <property type="project" value="UniProtKB-UniRule"/>
</dbReference>
<dbReference type="CDD" id="cd00472">
    <property type="entry name" value="Ribosomal_L24e_L24"/>
    <property type="match status" value="1"/>
</dbReference>
<dbReference type="FunFam" id="2.30.170.20:FF:000013">
    <property type="entry name" value="50S ribosomal protein L24e"/>
    <property type="match status" value="1"/>
</dbReference>
<dbReference type="Gene3D" id="2.30.170.20">
    <property type="entry name" value="Ribosomal protein L24e"/>
    <property type="match status" value="1"/>
</dbReference>
<dbReference type="HAMAP" id="MF_00773">
    <property type="entry name" value="Ribosomal_eL24"/>
    <property type="match status" value="1"/>
</dbReference>
<dbReference type="InterPro" id="IPR038630">
    <property type="entry name" value="L24e/L24_sf"/>
</dbReference>
<dbReference type="InterPro" id="IPR055345">
    <property type="entry name" value="Ribosomal_eL24-rel_arc"/>
</dbReference>
<dbReference type="InterPro" id="IPR000988">
    <property type="entry name" value="Ribosomal_eL24-rel_N"/>
</dbReference>
<dbReference type="InterPro" id="IPR023442">
    <property type="entry name" value="Ribosomal_eL24_CS"/>
</dbReference>
<dbReference type="InterPro" id="IPR011017">
    <property type="entry name" value="TRASH_dom"/>
</dbReference>
<dbReference type="NCBIfam" id="NF034186">
    <property type="entry name" value="PRK14891.1-1"/>
    <property type="match status" value="1"/>
</dbReference>
<dbReference type="Pfam" id="PF01246">
    <property type="entry name" value="Ribosomal_L24e"/>
    <property type="match status" value="1"/>
</dbReference>
<dbReference type="SMART" id="SM00746">
    <property type="entry name" value="TRASH"/>
    <property type="match status" value="1"/>
</dbReference>
<dbReference type="SUPFAM" id="SSF57716">
    <property type="entry name" value="Glucocorticoid receptor-like (DNA-binding domain)"/>
    <property type="match status" value="1"/>
</dbReference>
<dbReference type="PROSITE" id="PS01073">
    <property type="entry name" value="RIBOSOMAL_L24E"/>
    <property type="match status" value="1"/>
</dbReference>
<proteinExistence type="inferred from homology"/>
<organism>
    <name type="scientific">Halobacterium salinarum (strain ATCC 700922 / JCM 11081 / NRC-1)</name>
    <name type="common">Halobacterium halobium</name>
    <dbReference type="NCBI Taxonomy" id="64091"/>
    <lineage>
        <taxon>Archaea</taxon>
        <taxon>Methanobacteriati</taxon>
        <taxon>Methanobacteriota</taxon>
        <taxon>Stenosarchaea group</taxon>
        <taxon>Halobacteria</taxon>
        <taxon>Halobacteriales</taxon>
        <taxon>Halobacteriaceae</taxon>
        <taxon>Halobacterium</taxon>
        <taxon>Halobacterium salinarum NRC-34001</taxon>
    </lineage>
</organism>
<name>RL24E_HALSA</name>
<keyword id="KW-0479">Metal-binding</keyword>
<keyword id="KW-1185">Reference proteome</keyword>
<keyword id="KW-0687">Ribonucleoprotein</keyword>
<keyword id="KW-0689">Ribosomal protein</keyword>
<keyword id="KW-0694">RNA-binding</keyword>
<keyword id="KW-0699">rRNA-binding</keyword>
<keyword id="KW-0862">Zinc</keyword>
<keyword id="KW-0863">Zinc-finger</keyword>
<accession>P61120</accession>
<accession>P61121</accession>
<accession>Q9HQH6</accession>
<gene>
    <name evidence="1" type="primary">rpl24e</name>
    <name type="ordered locus">VNG_1159G</name>
</gene>
<sequence length="62" mass="7000">MVQTRSCDYCGDDIEPGTGTMFVHNDGSTVHFCSAKCEKNADLGREPRDVEWTDEEEVEETQ</sequence>
<comment type="function">
    <text evidence="1">Binds to the 23S rRNA.</text>
</comment>
<comment type="cofactor">
    <cofactor evidence="1">
        <name>Zn(2+)</name>
        <dbReference type="ChEBI" id="CHEBI:29105"/>
    </cofactor>
    <text evidence="1">Binds 1 zinc ion per subunit.</text>
</comment>
<comment type="subunit">
    <text evidence="1">Part of the 50S ribosomal subunit. Forms a cluster with proteins L3 and L14.</text>
</comment>
<comment type="similarity">
    <text evidence="1">Belongs to the eukaryotic ribosomal protein eL24 family.</text>
</comment>
<evidence type="ECO:0000255" key="1">
    <source>
        <dbReference type="HAMAP-Rule" id="MF_00773"/>
    </source>
</evidence>
<evidence type="ECO:0000305" key="2"/>
<feature type="chain" id="PRO_0000136914" description="Large ribosomal subunit protein eL24">
    <location>
        <begin position="1"/>
        <end position="62"/>
    </location>
</feature>
<feature type="zinc finger region" description="C4-type" evidence="1">
    <location>
        <begin position="7"/>
        <end position="37"/>
    </location>
</feature>
<feature type="binding site" evidence="1">
    <location>
        <position position="7"/>
    </location>
    <ligand>
        <name>Zn(2+)</name>
        <dbReference type="ChEBI" id="CHEBI:29105"/>
    </ligand>
</feature>
<feature type="binding site" evidence="1">
    <location>
        <position position="10"/>
    </location>
    <ligand>
        <name>Zn(2+)</name>
        <dbReference type="ChEBI" id="CHEBI:29105"/>
    </ligand>
</feature>
<feature type="binding site" evidence="1">
    <location>
        <position position="33"/>
    </location>
    <ligand>
        <name>Zn(2+)</name>
        <dbReference type="ChEBI" id="CHEBI:29105"/>
    </ligand>
</feature>
<feature type="binding site" evidence="1">
    <location>
        <position position="37"/>
    </location>
    <ligand>
        <name>Zn(2+)</name>
        <dbReference type="ChEBI" id="CHEBI:29105"/>
    </ligand>
</feature>
<protein>
    <recommendedName>
        <fullName evidence="1">Large ribosomal subunit protein eL24</fullName>
    </recommendedName>
    <alternativeName>
        <fullName evidence="2">50S ribosomal protein L24e</fullName>
    </alternativeName>
</protein>
<reference key="1">
    <citation type="submission" date="1999-12" db="EMBL/GenBank/DDBJ databases">
        <title>NDK from Halobacterium cutirubrum.</title>
        <authorList>
            <person name="Ishibashi M."/>
            <person name="Hiratsuka K."/>
            <person name="Yonezawa Y."/>
            <person name="Tokunaga H."/>
            <person name="Tokunaga M."/>
        </authorList>
    </citation>
    <scope>NUCLEOTIDE SEQUENCE [GENOMIC DNA]</scope>
</reference>
<reference key="2">
    <citation type="journal article" date="2000" name="Proc. Natl. Acad. Sci. U.S.A.">
        <title>Genome sequence of Halobacterium species NRC-1.</title>
        <authorList>
            <person name="Ng W.V."/>
            <person name="Kennedy S.P."/>
            <person name="Mahairas G.G."/>
            <person name="Berquist B."/>
            <person name="Pan M."/>
            <person name="Shukla H.D."/>
            <person name="Lasky S.R."/>
            <person name="Baliga N.S."/>
            <person name="Thorsson V."/>
            <person name="Sbrogna J."/>
            <person name="Swartzell S."/>
            <person name="Weir D."/>
            <person name="Hall J."/>
            <person name="Dahl T.A."/>
            <person name="Welti R."/>
            <person name="Goo Y.A."/>
            <person name="Leithauser B."/>
            <person name="Keller K."/>
            <person name="Cruz R."/>
            <person name="Danson M.J."/>
            <person name="Hough D.W."/>
            <person name="Maddocks D.G."/>
            <person name="Jablonski P.E."/>
            <person name="Krebs M.P."/>
            <person name="Angevine C.M."/>
            <person name="Dale H."/>
            <person name="Isenbarger T.A."/>
            <person name="Peck R.F."/>
            <person name="Pohlschroder M."/>
            <person name="Spudich J.L."/>
            <person name="Jung K.-H."/>
            <person name="Alam M."/>
            <person name="Freitas T."/>
            <person name="Hou S."/>
            <person name="Daniels C.J."/>
            <person name="Dennis P.P."/>
            <person name="Omer A.D."/>
            <person name="Ebhardt H."/>
            <person name="Lowe T.M."/>
            <person name="Liang P."/>
            <person name="Riley M."/>
            <person name="Hood L."/>
            <person name="DasSarma S."/>
        </authorList>
    </citation>
    <scope>NUCLEOTIDE SEQUENCE [LARGE SCALE GENOMIC DNA]</scope>
    <source>
        <strain>ATCC 700922 / JCM 11081 / NRC-1</strain>
    </source>
</reference>